<gene>
    <name evidence="1" type="primary">groEL</name>
    <name evidence="1" type="synonym">groL</name>
    <name type="ordered locus">Maqu_2030</name>
</gene>
<feature type="chain" id="PRO_1000025806" description="Chaperonin GroEL">
    <location>
        <begin position="1"/>
        <end position="550"/>
    </location>
</feature>
<feature type="binding site" evidence="1">
    <location>
        <begin position="30"/>
        <end position="33"/>
    </location>
    <ligand>
        <name>ATP</name>
        <dbReference type="ChEBI" id="CHEBI:30616"/>
    </ligand>
</feature>
<feature type="binding site" evidence="1">
    <location>
        <position position="51"/>
    </location>
    <ligand>
        <name>ATP</name>
        <dbReference type="ChEBI" id="CHEBI:30616"/>
    </ligand>
</feature>
<feature type="binding site" evidence="1">
    <location>
        <begin position="87"/>
        <end position="91"/>
    </location>
    <ligand>
        <name>ATP</name>
        <dbReference type="ChEBI" id="CHEBI:30616"/>
    </ligand>
</feature>
<feature type="binding site" evidence="1">
    <location>
        <position position="415"/>
    </location>
    <ligand>
        <name>ATP</name>
        <dbReference type="ChEBI" id="CHEBI:30616"/>
    </ligand>
</feature>
<feature type="binding site" evidence="1">
    <location>
        <begin position="479"/>
        <end position="481"/>
    </location>
    <ligand>
        <name>ATP</name>
        <dbReference type="ChEBI" id="CHEBI:30616"/>
    </ligand>
</feature>
<feature type="binding site" evidence="1">
    <location>
        <position position="495"/>
    </location>
    <ligand>
        <name>ATP</name>
        <dbReference type="ChEBI" id="CHEBI:30616"/>
    </ligand>
</feature>
<reference key="1">
    <citation type="journal article" date="2011" name="Appl. Environ. Microbiol.">
        <title>Genomic potential of Marinobacter aquaeolei, a biogeochemical 'opportunitroph'.</title>
        <authorList>
            <person name="Singer E."/>
            <person name="Webb E.A."/>
            <person name="Nelson W.C."/>
            <person name="Heidelberg J.F."/>
            <person name="Ivanova N."/>
            <person name="Pati A."/>
            <person name="Edwards K.J."/>
        </authorList>
    </citation>
    <scope>NUCLEOTIDE SEQUENCE [LARGE SCALE GENOMIC DNA]</scope>
    <source>
        <strain>ATCC 700491 / DSM 11845 / VT8</strain>
    </source>
</reference>
<dbReference type="EC" id="5.6.1.7" evidence="1"/>
<dbReference type="EMBL" id="CP000514">
    <property type="protein sequence ID" value="ABM19111.1"/>
    <property type="molecule type" value="Genomic_DNA"/>
</dbReference>
<dbReference type="RefSeq" id="WP_011785504.1">
    <property type="nucleotide sequence ID" value="NC_008740.1"/>
</dbReference>
<dbReference type="SMR" id="A1U292"/>
<dbReference type="STRING" id="351348.Maqu_2030"/>
<dbReference type="KEGG" id="maq:Maqu_2030"/>
<dbReference type="eggNOG" id="COG0459">
    <property type="taxonomic scope" value="Bacteria"/>
</dbReference>
<dbReference type="HOGENOM" id="CLU_016503_3_0_6"/>
<dbReference type="OrthoDB" id="9766614at2"/>
<dbReference type="Proteomes" id="UP000000998">
    <property type="component" value="Chromosome"/>
</dbReference>
<dbReference type="GO" id="GO:0005737">
    <property type="term" value="C:cytoplasm"/>
    <property type="evidence" value="ECO:0007669"/>
    <property type="project" value="UniProtKB-SubCell"/>
</dbReference>
<dbReference type="GO" id="GO:0005524">
    <property type="term" value="F:ATP binding"/>
    <property type="evidence" value="ECO:0007669"/>
    <property type="project" value="UniProtKB-UniRule"/>
</dbReference>
<dbReference type="GO" id="GO:0140662">
    <property type="term" value="F:ATP-dependent protein folding chaperone"/>
    <property type="evidence" value="ECO:0007669"/>
    <property type="project" value="InterPro"/>
</dbReference>
<dbReference type="GO" id="GO:0016853">
    <property type="term" value="F:isomerase activity"/>
    <property type="evidence" value="ECO:0007669"/>
    <property type="project" value="UniProtKB-KW"/>
</dbReference>
<dbReference type="GO" id="GO:0051082">
    <property type="term" value="F:unfolded protein binding"/>
    <property type="evidence" value="ECO:0007669"/>
    <property type="project" value="UniProtKB-UniRule"/>
</dbReference>
<dbReference type="GO" id="GO:0042026">
    <property type="term" value="P:protein refolding"/>
    <property type="evidence" value="ECO:0007669"/>
    <property type="project" value="UniProtKB-UniRule"/>
</dbReference>
<dbReference type="CDD" id="cd03344">
    <property type="entry name" value="GroEL"/>
    <property type="match status" value="1"/>
</dbReference>
<dbReference type="FunFam" id="1.10.560.10:FF:000001">
    <property type="entry name" value="60 kDa chaperonin"/>
    <property type="match status" value="1"/>
</dbReference>
<dbReference type="FunFam" id="3.50.7.10:FF:000001">
    <property type="entry name" value="60 kDa chaperonin"/>
    <property type="match status" value="1"/>
</dbReference>
<dbReference type="Gene3D" id="3.50.7.10">
    <property type="entry name" value="GroEL"/>
    <property type="match status" value="1"/>
</dbReference>
<dbReference type="Gene3D" id="1.10.560.10">
    <property type="entry name" value="GroEL-like equatorial domain"/>
    <property type="match status" value="1"/>
</dbReference>
<dbReference type="Gene3D" id="3.30.260.10">
    <property type="entry name" value="TCP-1-like chaperonin intermediate domain"/>
    <property type="match status" value="1"/>
</dbReference>
<dbReference type="HAMAP" id="MF_00600">
    <property type="entry name" value="CH60"/>
    <property type="match status" value="1"/>
</dbReference>
<dbReference type="InterPro" id="IPR018370">
    <property type="entry name" value="Chaperonin_Cpn60_CS"/>
</dbReference>
<dbReference type="InterPro" id="IPR001844">
    <property type="entry name" value="Cpn60/GroEL"/>
</dbReference>
<dbReference type="InterPro" id="IPR002423">
    <property type="entry name" value="Cpn60/GroEL/TCP-1"/>
</dbReference>
<dbReference type="InterPro" id="IPR027409">
    <property type="entry name" value="GroEL-like_apical_dom_sf"/>
</dbReference>
<dbReference type="InterPro" id="IPR027413">
    <property type="entry name" value="GROEL-like_equatorial_sf"/>
</dbReference>
<dbReference type="InterPro" id="IPR027410">
    <property type="entry name" value="TCP-1-like_intermed_sf"/>
</dbReference>
<dbReference type="NCBIfam" id="TIGR02348">
    <property type="entry name" value="GroEL"/>
    <property type="match status" value="1"/>
</dbReference>
<dbReference type="NCBIfam" id="NF000592">
    <property type="entry name" value="PRK00013.1"/>
    <property type="match status" value="1"/>
</dbReference>
<dbReference type="NCBIfam" id="NF009487">
    <property type="entry name" value="PRK12849.1"/>
    <property type="match status" value="1"/>
</dbReference>
<dbReference type="NCBIfam" id="NF009488">
    <property type="entry name" value="PRK12850.1"/>
    <property type="match status" value="1"/>
</dbReference>
<dbReference type="NCBIfam" id="NF009489">
    <property type="entry name" value="PRK12851.1"/>
    <property type="match status" value="1"/>
</dbReference>
<dbReference type="PANTHER" id="PTHR45633">
    <property type="entry name" value="60 KDA HEAT SHOCK PROTEIN, MITOCHONDRIAL"/>
    <property type="match status" value="1"/>
</dbReference>
<dbReference type="Pfam" id="PF00118">
    <property type="entry name" value="Cpn60_TCP1"/>
    <property type="match status" value="1"/>
</dbReference>
<dbReference type="PRINTS" id="PR00298">
    <property type="entry name" value="CHAPERONIN60"/>
</dbReference>
<dbReference type="SUPFAM" id="SSF52029">
    <property type="entry name" value="GroEL apical domain-like"/>
    <property type="match status" value="1"/>
</dbReference>
<dbReference type="SUPFAM" id="SSF48592">
    <property type="entry name" value="GroEL equatorial domain-like"/>
    <property type="match status" value="1"/>
</dbReference>
<dbReference type="SUPFAM" id="SSF54849">
    <property type="entry name" value="GroEL-intermediate domain like"/>
    <property type="match status" value="1"/>
</dbReference>
<dbReference type="PROSITE" id="PS00296">
    <property type="entry name" value="CHAPERONINS_CPN60"/>
    <property type="match status" value="1"/>
</dbReference>
<accession>A1U292</accession>
<name>CH60_MARN8</name>
<organism>
    <name type="scientific">Marinobacter nauticus (strain ATCC 700491 / DSM 11845 / VT8)</name>
    <name type="common">Marinobacter aquaeolei</name>
    <dbReference type="NCBI Taxonomy" id="351348"/>
    <lineage>
        <taxon>Bacteria</taxon>
        <taxon>Pseudomonadati</taxon>
        <taxon>Pseudomonadota</taxon>
        <taxon>Gammaproteobacteria</taxon>
        <taxon>Pseudomonadales</taxon>
        <taxon>Marinobacteraceae</taxon>
        <taxon>Marinobacter</taxon>
    </lineage>
</organism>
<proteinExistence type="inferred from homology"/>
<comment type="function">
    <text evidence="1">Together with its co-chaperonin GroES, plays an essential role in assisting protein folding. The GroEL-GroES system forms a nano-cage that allows encapsulation of the non-native substrate proteins and provides a physical environment optimized to promote and accelerate protein folding.</text>
</comment>
<comment type="catalytic activity">
    <reaction evidence="1">
        <text>ATP + H2O + a folded polypeptide = ADP + phosphate + an unfolded polypeptide.</text>
        <dbReference type="EC" id="5.6.1.7"/>
    </reaction>
</comment>
<comment type="subunit">
    <text evidence="1">Forms a cylinder of 14 subunits composed of two heptameric rings stacked back-to-back. Interacts with the co-chaperonin GroES.</text>
</comment>
<comment type="subcellular location">
    <subcellularLocation>
        <location evidence="1">Cytoplasm</location>
    </subcellularLocation>
</comment>
<comment type="similarity">
    <text evidence="1">Belongs to the chaperonin (HSP60) family.</text>
</comment>
<evidence type="ECO:0000255" key="1">
    <source>
        <dbReference type="HAMAP-Rule" id="MF_00600"/>
    </source>
</evidence>
<protein>
    <recommendedName>
        <fullName evidence="1">Chaperonin GroEL</fullName>
        <ecNumber evidence="1">5.6.1.7</ecNumber>
    </recommendedName>
    <alternativeName>
        <fullName evidence="1">60 kDa chaperonin</fullName>
    </alternativeName>
    <alternativeName>
        <fullName evidence="1">Chaperonin-60</fullName>
        <shortName evidence="1">Cpn60</shortName>
    </alternativeName>
</protein>
<keyword id="KW-0067">ATP-binding</keyword>
<keyword id="KW-0143">Chaperone</keyword>
<keyword id="KW-0963">Cytoplasm</keyword>
<keyword id="KW-0413">Isomerase</keyword>
<keyword id="KW-0547">Nucleotide-binding</keyword>
<sequence length="550" mass="57811">MAAKDVKFGDSARKRMVAGVNILADAVKVTLGPKGRNVVLEKSFGAPTVTKDGVSVAKEIELKDKFENMGAQMVKEVASQANETAGDGTTTATVLAQSIVNEGIKAVTAGMNPMDLKRGIDKGTAEAVKAIREMAKPCDDSRMIAQVGTISANGDETIGKIIADAMEKVGKEGVITVEEGRGLEDELDVVEGMQFDRGFLSPYFINNQDNMSAELEDPYILLVDKKISNIRELLPVLEAVAKAGKPLQIIAEDIEGEALATLVVNNMRGIVKVNAVKAPGFGDRRKEMLQDIAILTGGTVISEEVGLTLENTTLDDLGTAKRVNVTKENTTIIGGAGAEADISARVEQIRKQIEDSSSDYDKEKLQERVAKLAGGVAVIKVGAGSEVEMKEKKARVEDALHSTRAAVEEGIVAGGGVTLIRAIAALDKVDAINDEQKAGVNILRRAMEAPLRQIVFNAGGESSVVVAKVKEGEGSFGFNAATEQYGDMLEMGILDPAKVTRSSLQAAASVASLIITTEAMVADEPEDDKAGGGMPDMGGMGGMGGMGGMM</sequence>